<name>KEDA_ACTSL</name>
<proteinExistence type="evidence at protein level"/>
<reference key="1">
    <citation type="journal article" date="1992" name="J. Antibiot.">
        <title>Kedarcidin, a new chromoprotein antitumor antibiotic. II. Isolation, purification and physico-chemical properties.</title>
        <authorList>
            <person name="Hofstead S.J."/>
            <person name="Matson J.A."/>
            <person name="Malacko A.R."/>
            <person name="Marquardt H."/>
        </authorList>
    </citation>
    <scope>PROTEIN SEQUENCE</scope>
    <source>
        <strain>ATCC 53650 / L585-6</strain>
    </source>
</reference>
<reference key="2">
    <citation type="journal article" date="1993" name="Proc. Natl. Acad. Sci. U.S.A.">
        <title>Selective proteolytic activity of the antitumor agent kedarcidin.</title>
        <authorList>
            <person name="Zein N."/>
            <person name="Casazza A.M."/>
            <person name="Doyle T.W."/>
            <person name="Leet J.E."/>
            <person name="Scheoeder D.R."/>
            <person name="Solomon W."/>
            <person name="Nadler S.G."/>
        </authorList>
    </citation>
    <scope>CHARACTERIZATION</scope>
</reference>
<reference key="3">
    <citation type="journal article" date="1994" name="Biochemistry">
        <title>Sequential 1H, 13C, and 15N NMR assignments and solution conformation of apokedarcidin.</title>
        <authorList>
            <person name="Constantine K.L."/>
            <person name="Colson K.L."/>
            <person name="Wittekind M."/>
            <person name="Friedrichs M.S."/>
            <person name="Zein N."/>
            <person name="Tuttle J."/>
            <person name="Langley D.R."/>
            <person name="Leet J.E."/>
            <person name="Schroeder D.R."/>
            <person name="Lam K.S."/>
            <person name="Farmer B.T. II"/>
            <person name="Metzler W.J."/>
            <person name="Bruccoleri R.E."/>
            <person name="Mueller L."/>
        </authorList>
    </citation>
    <scope>STRUCTURE BY NMR</scope>
    <source>
        <strain>ATCC 53650 / L585-6</strain>
    </source>
</reference>
<feature type="chain" id="PRO_0000213119" description="Apokedarcidin">
    <location>
        <begin position="1"/>
        <end position="114"/>
    </location>
</feature>
<feature type="disulfide bond" evidence="1 3">
    <location>
        <begin position="37"/>
        <end position="47"/>
    </location>
</feature>
<feature type="disulfide bond" evidence="1 3">
    <location>
        <begin position="88"/>
        <end position="95"/>
    </location>
</feature>
<feature type="strand" evidence="4">
    <location>
        <begin position="3"/>
        <end position="9"/>
    </location>
</feature>
<feature type="strand" evidence="4">
    <location>
        <begin position="11"/>
        <end position="13"/>
    </location>
</feature>
<feature type="strand" evidence="4">
    <location>
        <begin position="21"/>
        <end position="24"/>
    </location>
</feature>
<feature type="strand" evidence="4">
    <location>
        <begin position="36"/>
        <end position="39"/>
    </location>
</feature>
<feature type="strand" evidence="4">
    <location>
        <begin position="58"/>
        <end position="61"/>
    </location>
</feature>
<feature type="strand" evidence="4">
    <location>
        <begin position="70"/>
        <end position="74"/>
    </location>
</feature>
<feature type="turn" evidence="4">
    <location>
        <begin position="77"/>
        <end position="79"/>
    </location>
</feature>
<feature type="strand" evidence="4">
    <location>
        <begin position="84"/>
        <end position="97"/>
    </location>
</feature>
<feature type="strand" evidence="4">
    <location>
        <begin position="102"/>
        <end position="104"/>
    </location>
</feature>
<protein>
    <recommendedName>
        <fullName>Apokedarcidin</fullName>
    </recommendedName>
</protein>
<comment type="function">
    <text>Binds non-covalently to an enediyne chromophore which is the cytotoxic and mutagenic component of the antibiotic. The chromophore cleaves duplex DNA site-specifically in a single-stranded manner. The apoprotein cleaves proteins selectively, in particular highly basic histones, with H1 proteins being cleaved the more readily.</text>
</comment>
<comment type="domain">
    <text>This protein consists of an immunoglobulin-like seven-stranded antiparallel beta-barrel domain linked to a subdomain composed of two beta-hairpin ribbons.</text>
</comment>
<comment type="similarity">
    <text evidence="2">Belongs to the neocarzinostatin family.</text>
</comment>
<accession>P41249</accession>
<organism>
    <name type="scientific">Actinomycete sp. (strain L585-6 / ATCC 53650)</name>
    <dbReference type="NCBI Taxonomy" id="38989"/>
    <lineage>
        <taxon>Bacteria</taxon>
        <taxon>Bacillati</taxon>
        <taxon>Actinomycetota</taxon>
        <taxon>Actinomycetes</taxon>
        <taxon>Actinomycetales</taxon>
    </lineage>
</organism>
<sequence>ASAAVSVSPATGLADGATVTVSASGFATSTSATALQCAILADGRGACNVAEFHDFSLSGGEGTTSVVVRRSFTGYVMPDGPEVGAVDCDTAPGGCEIVVGGNTGEYGNAAISFG</sequence>
<dbReference type="PDB" id="1AKP">
    <property type="method" value="NMR"/>
    <property type="chains" value="A=1-114"/>
</dbReference>
<dbReference type="PDBsum" id="1AKP"/>
<dbReference type="BMRB" id="P41249"/>
<dbReference type="SMR" id="P41249"/>
<dbReference type="EvolutionaryTrace" id="P41249"/>
<dbReference type="GO" id="GO:0003677">
    <property type="term" value="F:DNA binding"/>
    <property type="evidence" value="ECO:0007669"/>
    <property type="project" value="UniProtKB-KW"/>
</dbReference>
<dbReference type="GO" id="GO:0042742">
    <property type="term" value="P:defense response to bacterium"/>
    <property type="evidence" value="ECO:0007669"/>
    <property type="project" value="UniProtKB-KW"/>
</dbReference>
<dbReference type="Gene3D" id="2.60.40.230">
    <property type="entry name" value="Neocarzinostatin-like"/>
    <property type="match status" value="1"/>
</dbReference>
<dbReference type="InterPro" id="IPR027273">
    <property type="entry name" value="Neocarzinostatin-like"/>
</dbReference>
<dbReference type="InterPro" id="IPR002186">
    <property type="entry name" value="Neocarzinostatin_fam"/>
</dbReference>
<dbReference type="NCBIfam" id="NF040680">
    <property type="entry name" value="chromo_anti"/>
    <property type="match status" value="1"/>
</dbReference>
<dbReference type="Pfam" id="PF00960">
    <property type="entry name" value="Neocarzinostat"/>
    <property type="match status" value="1"/>
</dbReference>
<dbReference type="PRINTS" id="PR01885">
    <property type="entry name" value="MACROMOMYCIN"/>
</dbReference>
<dbReference type="SUPFAM" id="SSF49319">
    <property type="entry name" value="Actinoxanthin-like"/>
    <property type="match status" value="1"/>
</dbReference>
<keyword id="KW-0002">3D-structure</keyword>
<keyword id="KW-0044">Antibiotic</keyword>
<keyword id="KW-0929">Antimicrobial</keyword>
<keyword id="KW-0903">Direct protein sequencing</keyword>
<keyword id="KW-1015">Disulfide bond</keyword>
<keyword id="KW-0238">DNA-binding</keyword>
<evidence type="ECO:0000269" key="1">
    <source>
    </source>
</evidence>
<evidence type="ECO:0000305" key="2"/>
<evidence type="ECO:0007744" key="3">
    <source>
        <dbReference type="PDB" id="1AKP"/>
    </source>
</evidence>
<evidence type="ECO:0007829" key="4">
    <source>
        <dbReference type="PDB" id="1AKP"/>
    </source>
</evidence>